<protein>
    <recommendedName>
        <fullName>Ly6/PLAUR domain-containing protein 6</fullName>
    </recommendedName>
</protein>
<feature type="signal peptide" evidence="2">
    <location>
        <begin position="1"/>
        <end position="22"/>
    </location>
</feature>
<feature type="chain" id="PRO_5008970952" description="Ly6/PLAUR domain-containing protein 6" evidence="2">
    <location>
        <begin position="23"/>
        <end position="149"/>
    </location>
</feature>
<feature type="propeptide" id="PRO_0000457044" description="Removed in mature form" evidence="2">
    <location>
        <begin position="150"/>
        <end position="174"/>
    </location>
</feature>
<feature type="domain" description="UPAR/Ly6">
    <location>
        <begin position="47"/>
        <end position="141"/>
    </location>
</feature>
<feature type="lipid moiety-binding region" description="GPI-anchor amidated serine" evidence="2">
    <location>
        <position position="149"/>
    </location>
</feature>
<feature type="glycosylation site" description="N-linked (GlcNAc...) asparagine" evidence="3">
    <location>
        <position position="134"/>
    </location>
</feature>
<feature type="glycosylation site" description="N-linked (GlcNAc...) asparagine" evidence="3">
    <location>
        <position position="147"/>
    </location>
</feature>
<feature type="disulfide bond" evidence="1">
    <location>
        <begin position="49"/>
        <end position="77"/>
    </location>
</feature>
<feature type="disulfide bond" evidence="1">
    <location>
        <begin position="52"/>
        <end position="61"/>
    </location>
</feature>
<feature type="disulfide bond" evidence="1">
    <location>
        <begin position="70"/>
        <end position="96"/>
    </location>
</feature>
<feature type="disulfide bond" evidence="1">
    <location>
        <begin position="102"/>
        <end position="121"/>
    </location>
</feature>
<feature type="disulfide bond" evidence="1">
    <location>
        <begin position="107"/>
        <end position="118"/>
    </location>
</feature>
<feature type="disulfide bond" evidence="1">
    <location>
        <begin position="122"/>
        <end position="127"/>
    </location>
</feature>
<evidence type="ECO:0000250" key="1">
    <source>
        <dbReference type="UniProtKB" id="Q86Y78"/>
    </source>
</evidence>
<evidence type="ECO:0000255" key="2"/>
<evidence type="ECO:0000255" key="3">
    <source>
        <dbReference type="PROSITE-ProRule" id="PRU00498"/>
    </source>
</evidence>
<evidence type="ECO:0000269" key="4">
    <source>
    </source>
</evidence>
<sequence length="174" mass="19585">MEPWPLMAWGLMLTAITGWIKAVQSRDFTEKDIIFLHPSTTPYPGGFKCFTCEDAPDNYECNRWAPDLYCPRESRYCYTHHKMSWDGNTVSVTKRCVPLEDCLQTGCSDIDHEGNRVCTACCEGNICNLPLPRNETDAIFSTTSPINRSAQSTQTLPLLLLSVSITSLMLHSIN</sequence>
<organism>
    <name type="scientific">Danio rerio</name>
    <name type="common">Zebrafish</name>
    <name type="synonym">Brachydanio rerio</name>
    <dbReference type="NCBI Taxonomy" id="7955"/>
    <lineage>
        <taxon>Eukaryota</taxon>
        <taxon>Metazoa</taxon>
        <taxon>Chordata</taxon>
        <taxon>Craniata</taxon>
        <taxon>Vertebrata</taxon>
        <taxon>Euteleostomi</taxon>
        <taxon>Actinopterygii</taxon>
        <taxon>Neopterygii</taxon>
        <taxon>Teleostei</taxon>
        <taxon>Ostariophysi</taxon>
        <taxon>Cypriniformes</taxon>
        <taxon>Danionidae</taxon>
        <taxon>Danioninae</taxon>
        <taxon>Danio</taxon>
    </lineage>
</organism>
<comment type="function">
    <text evidence="4">Acts as an important regulator of embryogenesis through its enhancement of Wnt/beta-catenin signaling. Positively regulates Wnt/beta-catenin signaling by ensuring phosphorylation of lrp6 specifically in plasma membrane rafts and its subsequent internalization into signaling-competent vesicles. Essential for the wnt8-mediated patterning of the mesoderm and neuroectoderm during gastrulation (PubMed:23987510).</text>
</comment>
<comment type="subunit">
    <text evidence="4">Interacts with fzd8 and lrp6 (PubMed:23987510).</text>
</comment>
<comment type="subcellular location">
    <subcellularLocation>
        <location evidence="4">Cell membrane</location>
        <topology evidence="4">Lipid-anchor</topology>
        <topology evidence="4">GPI-anchor</topology>
    </subcellularLocation>
    <subcellularLocation>
        <location evidence="4">Membrane raft</location>
    </subcellularLocation>
</comment>
<comment type="developmental stage">
    <text evidence="4">Initially detected in mesendodermal cells at late blastula stages. During gastrulation, expressed in a broad marginal domain and becomes excluded from the ventral animal pole at late gastrula stages. During segmentation, initially exclusively detected in the somitic mesoderm but later also in the otic and optic vesicles. During organogenesis, expression is largely down-regulated in the somites but maintained in the otic vesicles and the retina.</text>
</comment>
<keyword id="KW-1003">Cell membrane</keyword>
<keyword id="KW-1015">Disulfide bond</keyword>
<keyword id="KW-0325">Glycoprotein</keyword>
<keyword id="KW-0336">GPI-anchor</keyword>
<keyword id="KW-0449">Lipoprotein</keyword>
<keyword id="KW-0472">Membrane</keyword>
<keyword id="KW-1185">Reference proteome</keyword>
<keyword id="KW-0732">Signal</keyword>
<gene>
    <name type="primary">lypd6</name>
</gene>
<name>LYPD6_DANRE</name>
<accession>Q66IA6</accession>
<reference key="1">
    <citation type="journal article" date="2013" name="Nature">
        <title>The zebrafish reference genome sequence and its relationship to the human genome.</title>
        <authorList>
            <person name="Howe K."/>
            <person name="Clark M.D."/>
            <person name="Torroja C.F."/>
            <person name="Torrance J."/>
            <person name="Berthelot C."/>
            <person name="Muffato M."/>
            <person name="Collins J.E."/>
            <person name="Humphray S."/>
            <person name="McLaren K."/>
            <person name="Matthews L."/>
            <person name="McLaren S."/>
            <person name="Sealy I."/>
            <person name="Caccamo M."/>
            <person name="Churcher C."/>
            <person name="Scott C."/>
            <person name="Barrett J.C."/>
            <person name="Koch R."/>
            <person name="Rauch G.J."/>
            <person name="White S."/>
            <person name="Chow W."/>
            <person name="Kilian B."/>
            <person name="Quintais L.T."/>
            <person name="Guerra-Assuncao J.A."/>
            <person name="Zhou Y."/>
            <person name="Gu Y."/>
            <person name="Yen J."/>
            <person name="Vogel J.H."/>
            <person name="Eyre T."/>
            <person name="Redmond S."/>
            <person name="Banerjee R."/>
            <person name="Chi J."/>
            <person name="Fu B."/>
            <person name="Langley E."/>
            <person name="Maguire S.F."/>
            <person name="Laird G.K."/>
            <person name="Lloyd D."/>
            <person name="Kenyon E."/>
            <person name="Donaldson S."/>
            <person name="Sehra H."/>
            <person name="Almeida-King J."/>
            <person name="Loveland J."/>
            <person name="Trevanion S."/>
            <person name="Jones M."/>
            <person name="Quail M."/>
            <person name="Willey D."/>
            <person name="Hunt A."/>
            <person name="Burton J."/>
            <person name="Sims S."/>
            <person name="McLay K."/>
            <person name="Plumb B."/>
            <person name="Davis J."/>
            <person name="Clee C."/>
            <person name="Oliver K."/>
            <person name="Clark R."/>
            <person name="Riddle C."/>
            <person name="Elliot D."/>
            <person name="Threadgold G."/>
            <person name="Harden G."/>
            <person name="Ware D."/>
            <person name="Begum S."/>
            <person name="Mortimore B."/>
            <person name="Kerry G."/>
            <person name="Heath P."/>
            <person name="Phillimore B."/>
            <person name="Tracey A."/>
            <person name="Corby N."/>
            <person name="Dunn M."/>
            <person name="Johnson C."/>
            <person name="Wood J."/>
            <person name="Clark S."/>
            <person name="Pelan S."/>
            <person name="Griffiths G."/>
            <person name="Smith M."/>
            <person name="Glithero R."/>
            <person name="Howden P."/>
            <person name="Barker N."/>
            <person name="Lloyd C."/>
            <person name="Stevens C."/>
            <person name="Harley J."/>
            <person name="Holt K."/>
            <person name="Panagiotidis G."/>
            <person name="Lovell J."/>
            <person name="Beasley H."/>
            <person name="Henderson C."/>
            <person name="Gordon D."/>
            <person name="Auger K."/>
            <person name="Wright D."/>
            <person name="Collins J."/>
            <person name="Raisen C."/>
            <person name="Dyer L."/>
            <person name="Leung K."/>
            <person name="Robertson L."/>
            <person name="Ambridge K."/>
            <person name="Leongamornlert D."/>
            <person name="McGuire S."/>
            <person name="Gilderthorp R."/>
            <person name="Griffiths C."/>
            <person name="Manthravadi D."/>
            <person name="Nichol S."/>
            <person name="Barker G."/>
            <person name="Whitehead S."/>
            <person name="Kay M."/>
            <person name="Brown J."/>
            <person name="Murnane C."/>
            <person name="Gray E."/>
            <person name="Humphries M."/>
            <person name="Sycamore N."/>
            <person name="Barker D."/>
            <person name="Saunders D."/>
            <person name="Wallis J."/>
            <person name="Babbage A."/>
            <person name="Hammond S."/>
            <person name="Mashreghi-Mohammadi M."/>
            <person name="Barr L."/>
            <person name="Martin S."/>
            <person name="Wray P."/>
            <person name="Ellington A."/>
            <person name="Matthews N."/>
            <person name="Ellwood M."/>
            <person name="Woodmansey R."/>
            <person name="Clark G."/>
            <person name="Cooper J."/>
            <person name="Tromans A."/>
            <person name="Grafham D."/>
            <person name="Skuce C."/>
            <person name="Pandian R."/>
            <person name="Andrews R."/>
            <person name="Harrison E."/>
            <person name="Kimberley A."/>
            <person name="Garnett J."/>
            <person name="Fosker N."/>
            <person name="Hall R."/>
            <person name="Garner P."/>
            <person name="Kelly D."/>
            <person name="Bird C."/>
            <person name="Palmer S."/>
            <person name="Gehring I."/>
            <person name="Berger A."/>
            <person name="Dooley C.M."/>
            <person name="Ersan-Urun Z."/>
            <person name="Eser C."/>
            <person name="Geiger H."/>
            <person name="Geisler M."/>
            <person name="Karotki L."/>
            <person name="Kirn A."/>
            <person name="Konantz J."/>
            <person name="Konantz M."/>
            <person name="Oberlander M."/>
            <person name="Rudolph-Geiger S."/>
            <person name="Teucke M."/>
            <person name="Lanz C."/>
            <person name="Raddatz G."/>
            <person name="Osoegawa K."/>
            <person name="Zhu B."/>
            <person name="Rapp A."/>
            <person name="Widaa S."/>
            <person name="Langford C."/>
            <person name="Yang F."/>
            <person name="Schuster S.C."/>
            <person name="Carter N.P."/>
            <person name="Harrow J."/>
            <person name="Ning Z."/>
            <person name="Herrero J."/>
            <person name="Searle S.M."/>
            <person name="Enright A."/>
            <person name="Geisler R."/>
            <person name="Plasterk R.H."/>
            <person name="Lee C."/>
            <person name="Westerfield M."/>
            <person name="de Jong P.J."/>
            <person name="Zon L.I."/>
            <person name="Postlethwait J.H."/>
            <person name="Nusslein-Volhard C."/>
            <person name="Hubbard T.J."/>
            <person name="Roest Crollius H."/>
            <person name="Rogers J."/>
            <person name="Stemple D.L."/>
        </authorList>
    </citation>
    <scope>NUCLEOTIDE SEQUENCE [LARGE SCALE GENOMIC DNA]</scope>
    <source>
        <strain>Tuebingen</strain>
    </source>
</reference>
<reference key="2">
    <citation type="submission" date="2004-09" db="EMBL/GenBank/DDBJ databases">
        <authorList>
            <consortium name="NIH - Zebrafish Gene Collection (ZGC) project"/>
        </authorList>
    </citation>
    <scope>NUCLEOTIDE SEQUENCE [LARGE SCALE MRNA]</scope>
    <source>
        <tissue>Larva</tissue>
    </source>
</reference>
<reference key="3">
    <citation type="journal article" date="2013" name="Dev. Cell">
        <title>Lypd6 enhances Wnt/beta-catenin signaling by promoting Lrp6 phosphorylation in raft plasma membrane domains.</title>
        <authorList>
            <person name="Oezhan G."/>
            <person name="Sezgin E."/>
            <person name="Wehner D."/>
            <person name="Pfister A.S."/>
            <person name="Kuehl S.J."/>
            <person name="Kagermeier-Schenk B."/>
            <person name="Kuehl M."/>
            <person name="Schwille P."/>
            <person name="Weidinger G."/>
        </authorList>
    </citation>
    <scope>FUNCTION</scope>
    <scope>SUBCELLULAR LOCATION</scope>
    <scope>DEVELOPMENTAL STAGE</scope>
    <scope>INTERACTION WITH FZD8 AND LRP6</scope>
</reference>
<dbReference type="EMBL" id="CR394542">
    <property type="status" value="NOT_ANNOTATED_CDS"/>
    <property type="molecule type" value="Genomic_DNA"/>
</dbReference>
<dbReference type="EMBL" id="BC081426">
    <property type="protein sequence ID" value="AAH81426.1"/>
    <property type="molecule type" value="mRNA"/>
</dbReference>
<dbReference type="RefSeq" id="NP_001004670.1">
    <property type="nucleotide sequence ID" value="NM_001004670.1"/>
</dbReference>
<dbReference type="RefSeq" id="XP_021334318.1">
    <property type="nucleotide sequence ID" value="XM_021478643.2"/>
</dbReference>
<dbReference type="SMR" id="Q66IA6"/>
<dbReference type="FunCoup" id="Q66IA6">
    <property type="interactions" value="567"/>
</dbReference>
<dbReference type="STRING" id="7955.ENSDARP00000013064"/>
<dbReference type="GlyCosmos" id="Q66IA6">
    <property type="glycosylation" value="2 sites, No reported glycans"/>
</dbReference>
<dbReference type="PaxDb" id="7955-ENSDARP00000013064"/>
<dbReference type="Ensembl" id="ENSDART00000020884">
    <property type="protein sequence ID" value="ENSDARP00000013064"/>
    <property type="gene ID" value="ENSDARG00000004307"/>
</dbReference>
<dbReference type="GeneID" id="447932"/>
<dbReference type="KEGG" id="dre:447932"/>
<dbReference type="AGR" id="ZFIN:ZDB-GENE-040912-117"/>
<dbReference type="CTD" id="130574"/>
<dbReference type="ZFIN" id="ZDB-GENE-040912-117">
    <property type="gene designation" value="lypd6"/>
</dbReference>
<dbReference type="eggNOG" id="ENOG502RYB5">
    <property type="taxonomic scope" value="Eukaryota"/>
</dbReference>
<dbReference type="HOGENOM" id="CLU_105474_1_0_1"/>
<dbReference type="InParanoid" id="Q66IA6"/>
<dbReference type="OMA" id="AWPTVAW"/>
<dbReference type="OrthoDB" id="6149028at2759"/>
<dbReference type="PhylomeDB" id="Q66IA6"/>
<dbReference type="TreeFam" id="TF332443"/>
<dbReference type="PRO" id="PR:Q66IA6"/>
<dbReference type="Proteomes" id="UP000000437">
    <property type="component" value="Chromosome 9"/>
</dbReference>
<dbReference type="Bgee" id="ENSDARG00000004307">
    <property type="expression patterns" value="Expressed in retina and 32 other cell types or tissues"/>
</dbReference>
<dbReference type="GO" id="GO:0045121">
    <property type="term" value="C:membrane raft"/>
    <property type="evidence" value="ECO:0007669"/>
    <property type="project" value="UniProtKB-SubCell"/>
</dbReference>
<dbReference type="GO" id="GO:0005886">
    <property type="term" value="C:plasma membrane"/>
    <property type="evidence" value="ECO:0000314"/>
    <property type="project" value="UniProtKB"/>
</dbReference>
<dbReference type="GO" id="GO:0098552">
    <property type="term" value="C:side of membrane"/>
    <property type="evidence" value="ECO:0007669"/>
    <property type="project" value="UniProtKB-KW"/>
</dbReference>
<dbReference type="GO" id="GO:0030550">
    <property type="term" value="F:acetylcholine receptor inhibitor activity"/>
    <property type="evidence" value="ECO:0000318"/>
    <property type="project" value="GO_Central"/>
</dbReference>
<dbReference type="GO" id="GO:0090263">
    <property type="term" value="P:positive regulation of canonical Wnt signaling pathway"/>
    <property type="evidence" value="ECO:0000316"/>
    <property type="project" value="ZFIN"/>
</dbReference>
<dbReference type="GO" id="GO:0060828">
    <property type="term" value="P:regulation of canonical Wnt signaling pathway"/>
    <property type="evidence" value="ECO:0000315"/>
    <property type="project" value="ZFIN"/>
</dbReference>
<dbReference type="GO" id="GO:0030111">
    <property type="term" value="P:regulation of Wnt signaling pathway"/>
    <property type="evidence" value="ECO:0000315"/>
    <property type="project" value="ZFIN"/>
</dbReference>
<dbReference type="GO" id="GO:0060061">
    <property type="term" value="P:Spemann organizer formation"/>
    <property type="evidence" value="ECO:0000315"/>
    <property type="project" value="ZFIN"/>
</dbReference>
<dbReference type="CDD" id="cd23625">
    <property type="entry name" value="TFP_LU_ECD_LYPD6"/>
    <property type="match status" value="1"/>
</dbReference>
<dbReference type="FunFam" id="2.10.60.10:FF:000004">
    <property type="entry name" value="Ly6/PLAUR domain-containing protein 6"/>
    <property type="match status" value="1"/>
</dbReference>
<dbReference type="Gene3D" id="2.10.60.10">
    <property type="entry name" value="CD59"/>
    <property type="match status" value="1"/>
</dbReference>
<dbReference type="InterPro" id="IPR039457">
    <property type="entry name" value="LYPD6-like"/>
</dbReference>
<dbReference type="InterPro" id="IPR045860">
    <property type="entry name" value="Snake_toxin-like_sf"/>
</dbReference>
<dbReference type="PANTHER" id="PTHR31171">
    <property type="entry name" value="LY6/PLAUR DOMAIN-CONTAINING PROTEIN 6"/>
    <property type="match status" value="1"/>
</dbReference>
<dbReference type="PANTHER" id="PTHR31171:SF0">
    <property type="entry name" value="LY6_PLAUR DOMAIN-CONTAINING PROTEIN 6"/>
    <property type="match status" value="1"/>
</dbReference>
<dbReference type="Pfam" id="PF16975">
    <property type="entry name" value="UPAR_LY6_2"/>
    <property type="match status" value="1"/>
</dbReference>
<dbReference type="SUPFAM" id="SSF57302">
    <property type="entry name" value="Snake toxin-like"/>
    <property type="match status" value="1"/>
</dbReference>
<proteinExistence type="evidence at protein level"/>